<proteinExistence type="evidence at protein level"/>
<accession>Q9WYG7</accession>
<reference key="1">
    <citation type="journal article" date="1999" name="Nature">
        <title>Evidence for lateral gene transfer between Archaea and Bacteria from genome sequence of Thermotoga maritima.</title>
        <authorList>
            <person name="Nelson K.E."/>
            <person name="Clayton R.A."/>
            <person name="Gill S.R."/>
            <person name="Gwinn M.L."/>
            <person name="Dodson R.J."/>
            <person name="Haft D.H."/>
            <person name="Hickey E.K."/>
            <person name="Peterson J.D."/>
            <person name="Nelson W.C."/>
            <person name="Ketchum K.A."/>
            <person name="McDonald L.A."/>
            <person name="Utterback T.R."/>
            <person name="Malek J.A."/>
            <person name="Linher K.D."/>
            <person name="Garrett M.M."/>
            <person name="Stewart A.M."/>
            <person name="Cotton M.D."/>
            <person name="Pratt M.S."/>
            <person name="Phillips C.A."/>
            <person name="Richardson D.L."/>
            <person name="Heidelberg J.F."/>
            <person name="Sutton G.G."/>
            <person name="Fleischmann R.D."/>
            <person name="Eisen J.A."/>
            <person name="White O."/>
            <person name="Salzberg S.L."/>
            <person name="Smith H.O."/>
            <person name="Venter J.C."/>
            <person name="Fraser C.M."/>
        </authorList>
    </citation>
    <scope>NUCLEOTIDE SEQUENCE [LARGE SCALE GENOMIC DNA]</scope>
    <source>
        <strain>ATCC 43589 / DSM 3109 / JCM 10099 / NBRC 100826 / MSB8</strain>
    </source>
</reference>
<reference key="2">
    <citation type="submission" date="2005-01" db="PDB data bank">
        <title>Crystal Structure of orotidine 5'-phosphate decarboxylase (TM0332) from Thermotoga maritima at 2.00 A resolution.</title>
        <authorList>
            <consortium name="Joint center for structural genomics (JCSG)"/>
        </authorList>
    </citation>
    <scope>X-RAY CRYSTALLOGRAPHY (2.0 ANGSTROMS)</scope>
    <scope>SUBUNIT</scope>
</reference>
<comment type="function">
    <text evidence="1">Catalyzes the decarboxylation of orotidine 5'-monophosphate (OMP) to uridine 5'-monophosphate (UMP).</text>
</comment>
<comment type="catalytic activity">
    <reaction evidence="2">
        <text>orotidine 5'-phosphate + H(+) = UMP + CO2</text>
        <dbReference type="Rhea" id="RHEA:11596"/>
        <dbReference type="ChEBI" id="CHEBI:15378"/>
        <dbReference type="ChEBI" id="CHEBI:16526"/>
        <dbReference type="ChEBI" id="CHEBI:57538"/>
        <dbReference type="ChEBI" id="CHEBI:57865"/>
        <dbReference type="EC" id="4.1.1.23"/>
    </reaction>
</comment>
<comment type="pathway">
    <text>Pyrimidine metabolism; UMP biosynthesis via de novo pathway; UMP from orotate: step 2/2.</text>
</comment>
<comment type="subunit">
    <text evidence="3">Homodimer.</text>
</comment>
<comment type="similarity">
    <text evidence="4">Belongs to the OMP decarboxylase family. Type 1 subfamily.</text>
</comment>
<gene>
    <name type="primary">pyrF</name>
    <name type="ordered locus">TM_0332</name>
</gene>
<protein>
    <recommendedName>
        <fullName>Orotidine 5'-phosphate decarboxylase</fullName>
        <ecNumber>4.1.1.23</ecNumber>
    </recommendedName>
    <alternativeName>
        <fullName>OMP decarboxylase</fullName>
        <shortName>OMPDCase</shortName>
        <shortName>OMPdecase</shortName>
    </alternativeName>
</protein>
<keyword id="KW-0002">3D-structure</keyword>
<keyword id="KW-0210">Decarboxylase</keyword>
<keyword id="KW-0456">Lyase</keyword>
<keyword id="KW-0665">Pyrimidine biosynthesis</keyword>
<keyword id="KW-1185">Reference proteome</keyword>
<name>PYRF_THEMA</name>
<sequence>MTPVLSLDMEDPIRFIDENGSFEVVKVGHNLAIHGKKIFDELAKRNLKIILDLKFCDIPSTVERSIKSWDHPAIIGFTVHSCAGYESVERALSATDKHVFVVVKLTSMEGSLEDYMDRIEKLNKLGCDFVLPGPWAKALREKIKGKILVPGIRMEVKADDQKDVVTLEEMKGIANFAVLGREIYLSENPREKIKRIKEMRL</sequence>
<feature type="chain" id="PRO_0000134595" description="Orotidine 5'-phosphate decarboxylase">
    <location>
        <begin position="1"/>
        <end position="201"/>
    </location>
</feature>
<feature type="active site" description="Proton donor" evidence="2">
    <location>
        <position position="54"/>
    </location>
</feature>
<feature type="binding site" evidence="1">
    <location>
        <position position="8"/>
    </location>
    <ligand>
        <name>substrate</name>
    </ligand>
</feature>
<feature type="binding site" evidence="1">
    <location>
        <position position="26"/>
    </location>
    <ligand>
        <name>substrate</name>
    </ligand>
</feature>
<feature type="binding site" evidence="1">
    <location>
        <begin position="52"/>
        <end position="61"/>
    </location>
    <ligand>
        <name>substrate</name>
    </ligand>
</feature>
<feature type="binding site" evidence="1">
    <location>
        <position position="106"/>
    </location>
    <ligand>
        <name>substrate</name>
    </ligand>
</feature>
<feature type="binding site" evidence="1">
    <location>
        <position position="153"/>
    </location>
    <ligand>
        <name>substrate</name>
    </ligand>
</feature>
<feature type="binding site" evidence="1">
    <location>
        <position position="161"/>
    </location>
    <ligand>
        <name>substrate</name>
    </ligand>
</feature>
<feature type="binding site" evidence="1">
    <location>
        <position position="180"/>
    </location>
    <ligand>
        <name>substrate</name>
    </ligand>
</feature>
<feature type="binding site" evidence="1">
    <location>
        <position position="181"/>
    </location>
    <ligand>
        <name>substrate</name>
    </ligand>
</feature>
<feature type="strand" evidence="5">
    <location>
        <begin position="2"/>
        <end position="6"/>
    </location>
</feature>
<feature type="strand" evidence="5">
    <location>
        <begin position="9"/>
        <end position="11"/>
    </location>
</feature>
<feature type="helix" evidence="5">
    <location>
        <begin position="12"/>
        <end position="19"/>
    </location>
</feature>
<feature type="strand" evidence="5">
    <location>
        <begin position="23"/>
        <end position="27"/>
    </location>
</feature>
<feature type="helix" evidence="5">
    <location>
        <begin position="29"/>
        <end position="32"/>
    </location>
</feature>
<feature type="helix" evidence="5">
    <location>
        <begin position="37"/>
        <end position="43"/>
    </location>
</feature>
<feature type="turn" evidence="5">
    <location>
        <begin position="44"/>
        <end position="46"/>
    </location>
</feature>
<feature type="strand" evidence="5">
    <location>
        <begin position="48"/>
        <end position="55"/>
    </location>
</feature>
<feature type="helix" evidence="5">
    <location>
        <begin position="59"/>
        <end position="69"/>
    </location>
</feature>
<feature type="strand" evidence="5">
    <location>
        <begin position="74"/>
        <end position="80"/>
    </location>
</feature>
<feature type="helix" evidence="5">
    <location>
        <begin position="81"/>
        <end position="83"/>
    </location>
</feature>
<feature type="helix" evidence="5">
    <location>
        <begin position="85"/>
        <end position="94"/>
    </location>
</feature>
<feature type="strand" evidence="5">
    <location>
        <begin position="96"/>
        <end position="102"/>
    </location>
</feature>
<feature type="helix" evidence="5">
    <location>
        <begin position="112"/>
        <end position="124"/>
    </location>
</feature>
<feature type="strand" evidence="5">
    <location>
        <begin position="128"/>
        <end position="130"/>
    </location>
</feature>
<feature type="helix" evidence="5">
    <location>
        <begin position="133"/>
        <end position="139"/>
    </location>
</feature>
<feature type="turn" evidence="5">
    <location>
        <begin position="140"/>
        <end position="142"/>
    </location>
</feature>
<feature type="strand" evidence="5">
    <location>
        <begin position="147"/>
        <end position="149"/>
    </location>
</feature>
<feature type="helix" evidence="5">
    <location>
        <begin position="167"/>
        <end position="170"/>
    </location>
</feature>
<feature type="turn" evidence="5">
    <location>
        <begin position="171"/>
        <end position="173"/>
    </location>
</feature>
<feature type="strand" evidence="5">
    <location>
        <begin position="175"/>
        <end position="180"/>
    </location>
</feature>
<feature type="helix" evidence="5">
    <location>
        <begin position="181"/>
        <end position="184"/>
    </location>
</feature>
<feature type="helix" evidence="5">
    <location>
        <begin position="189"/>
        <end position="196"/>
    </location>
</feature>
<evidence type="ECO:0000250" key="1"/>
<evidence type="ECO:0000255" key="2">
    <source>
        <dbReference type="PROSITE-ProRule" id="PRU10110"/>
    </source>
</evidence>
<evidence type="ECO:0000269" key="3">
    <source ref="2"/>
</evidence>
<evidence type="ECO:0000305" key="4"/>
<evidence type="ECO:0007829" key="5">
    <source>
        <dbReference type="PDB" id="1VQT"/>
    </source>
</evidence>
<dbReference type="EC" id="4.1.1.23"/>
<dbReference type="EMBL" id="AE000512">
    <property type="protein sequence ID" value="AAD35419.1"/>
    <property type="molecule type" value="Genomic_DNA"/>
</dbReference>
<dbReference type="PIR" id="F72390">
    <property type="entry name" value="F72390"/>
</dbReference>
<dbReference type="RefSeq" id="NP_228143.1">
    <property type="nucleotide sequence ID" value="NC_000853.1"/>
</dbReference>
<dbReference type="RefSeq" id="WP_004083099.1">
    <property type="nucleotide sequence ID" value="NC_000853.1"/>
</dbReference>
<dbReference type="PDB" id="1VQT">
    <property type="method" value="X-ray"/>
    <property type="resolution" value="2.00 A"/>
    <property type="chains" value="A=1-201"/>
</dbReference>
<dbReference type="PDBsum" id="1VQT"/>
<dbReference type="SMR" id="Q9WYG7"/>
<dbReference type="FunCoup" id="Q9WYG7">
    <property type="interactions" value="149"/>
</dbReference>
<dbReference type="STRING" id="243274.TM_0332"/>
<dbReference type="PaxDb" id="243274-THEMA_03060"/>
<dbReference type="EnsemblBacteria" id="AAD35419">
    <property type="protein sequence ID" value="AAD35419"/>
    <property type="gene ID" value="TM_0332"/>
</dbReference>
<dbReference type="KEGG" id="tma:TM0332"/>
<dbReference type="KEGG" id="tmi:THEMA_03060"/>
<dbReference type="KEGG" id="tmm:Tmari_0330"/>
<dbReference type="KEGG" id="tmw:THMA_0340"/>
<dbReference type="eggNOG" id="COG0284">
    <property type="taxonomic scope" value="Bacteria"/>
</dbReference>
<dbReference type="InParanoid" id="Q9WYG7"/>
<dbReference type="OrthoDB" id="9806203at2"/>
<dbReference type="UniPathway" id="UPA00070">
    <property type="reaction ID" value="UER00120"/>
</dbReference>
<dbReference type="EvolutionaryTrace" id="Q9WYG7"/>
<dbReference type="Proteomes" id="UP000008183">
    <property type="component" value="Chromosome"/>
</dbReference>
<dbReference type="GO" id="GO:0005829">
    <property type="term" value="C:cytosol"/>
    <property type="evidence" value="ECO:0000318"/>
    <property type="project" value="GO_Central"/>
</dbReference>
<dbReference type="GO" id="GO:0004590">
    <property type="term" value="F:orotidine-5'-phosphate decarboxylase activity"/>
    <property type="evidence" value="ECO:0000318"/>
    <property type="project" value="GO_Central"/>
</dbReference>
<dbReference type="GO" id="GO:0006207">
    <property type="term" value="P:'de novo' pyrimidine nucleobase biosynthetic process"/>
    <property type="evidence" value="ECO:0000318"/>
    <property type="project" value="GO_Central"/>
</dbReference>
<dbReference type="GO" id="GO:0044205">
    <property type="term" value="P:'de novo' UMP biosynthetic process"/>
    <property type="evidence" value="ECO:0007669"/>
    <property type="project" value="UniProtKB-UniPathway"/>
</dbReference>
<dbReference type="CDD" id="cd04725">
    <property type="entry name" value="OMP_decarboxylase_like"/>
    <property type="match status" value="1"/>
</dbReference>
<dbReference type="Gene3D" id="3.20.20.70">
    <property type="entry name" value="Aldolase class I"/>
    <property type="match status" value="1"/>
</dbReference>
<dbReference type="InterPro" id="IPR013785">
    <property type="entry name" value="Aldolase_TIM"/>
</dbReference>
<dbReference type="InterPro" id="IPR014732">
    <property type="entry name" value="OMPdecase"/>
</dbReference>
<dbReference type="InterPro" id="IPR018089">
    <property type="entry name" value="OMPdecase_AS"/>
</dbReference>
<dbReference type="InterPro" id="IPR001754">
    <property type="entry name" value="OMPdeCOase_dom"/>
</dbReference>
<dbReference type="InterPro" id="IPR011060">
    <property type="entry name" value="RibuloseP-bd_barrel"/>
</dbReference>
<dbReference type="NCBIfam" id="TIGR01740">
    <property type="entry name" value="pyrF"/>
    <property type="match status" value="1"/>
</dbReference>
<dbReference type="PANTHER" id="PTHR32119">
    <property type="entry name" value="OROTIDINE 5'-PHOSPHATE DECARBOXYLASE"/>
    <property type="match status" value="1"/>
</dbReference>
<dbReference type="PANTHER" id="PTHR32119:SF2">
    <property type="entry name" value="OROTIDINE 5'-PHOSPHATE DECARBOXYLASE"/>
    <property type="match status" value="1"/>
</dbReference>
<dbReference type="Pfam" id="PF00215">
    <property type="entry name" value="OMPdecase"/>
    <property type="match status" value="1"/>
</dbReference>
<dbReference type="SMART" id="SM00934">
    <property type="entry name" value="OMPdecase"/>
    <property type="match status" value="1"/>
</dbReference>
<dbReference type="SUPFAM" id="SSF51366">
    <property type="entry name" value="Ribulose-phoshate binding barrel"/>
    <property type="match status" value="1"/>
</dbReference>
<dbReference type="PROSITE" id="PS00156">
    <property type="entry name" value="OMPDECASE"/>
    <property type="match status" value="1"/>
</dbReference>
<organism>
    <name type="scientific">Thermotoga maritima (strain ATCC 43589 / DSM 3109 / JCM 10099 / NBRC 100826 / MSB8)</name>
    <dbReference type="NCBI Taxonomy" id="243274"/>
    <lineage>
        <taxon>Bacteria</taxon>
        <taxon>Thermotogati</taxon>
        <taxon>Thermotogota</taxon>
        <taxon>Thermotogae</taxon>
        <taxon>Thermotogales</taxon>
        <taxon>Thermotogaceae</taxon>
        <taxon>Thermotoga</taxon>
    </lineage>
</organism>